<comment type="function">
    <text evidence="4">Mediates visceral muscle contractile activity (myotropic activity).</text>
</comment>
<comment type="subcellular location">
    <subcellularLocation>
        <location evidence="4">Secreted</location>
    </subcellularLocation>
</comment>
<comment type="similarity">
    <text evidence="1">Belongs to the periviscerokinin family.</text>
</comment>
<sequence length="11" mass="1117">ASSGLISMPRV</sequence>
<organism>
    <name type="scientific">Mastotermes darwiniensis</name>
    <name type="common">Giant northern termite</name>
    <dbReference type="NCBI Taxonomy" id="13139"/>
    <lineage>
        <taxon>Eukaryota</taxon>
        <taxon>Metazoa</taxon>
        <taxon>Ecdysozoa</taxon>
        <taxon>Arthropoda</taxon>
        <taxon>Hexapoda</taxon>
        <taxon>Insecta</taxon>
        <taxon>Pterygota</taxon>
        <taxon>Neoptera</taxon>
        <taxon>Polyneoptera</taxon>
        <taxon>Dictyoptera</taxon>
        <taxon>Blattodea</taxon>
        <taxon>Blattoidea</taxon>
        <taxon>Termitoidae</taxon>
        <taxon>Mastotermitidae</taxon>
        <taxon>Mastotermes</taxon>
    </lineage>
</organism>
<accession>P85678</accession>
<reference evidence="4" key="1">
    <citation type="journal article" date="2009" name="BMC Evol. Biol.">
        <title>A proteomic approach for studying insect phylogeny: CAPA peptides of ancient insect taxa (Dictyoptera, Blattoptera) as a test case.</title>
        <authorList>
            <person name="Roth S."/>
            <person name="Fromm B."/>
            <person name="Gaede G."/>
            <person name="Predel R."/>
        </authorList>
    </citation>
    <scope>PROTEIN SEQUENCE</scope>
    <scope>AMIDATION AT VAL-11</scope>
    <source>
        <tissue evidence="2">Abdominal perisympathetic organs</tissue>
    </source>
</reference>
<dbReference type="GO" id="GO:0005576">
    <property type="term" value="C:extracellular region"/>
    <property type="evidence" value="ECO:0007669"/>
    <property type="project" value="UniProtKB-SubCell"/>
</dbReference>
<dbReference type="GO" id="GO:0007218">
    <property type="term" value="P:neuropeptide signaling pathway"/>
    <property type="evidence" value="ECO:0007669"/>
    <property type="project" value="UniProtKB-KW"/>
</dbReference>
<dbReference type="InterPro" id="IPR013231">
    <property type="entry name" value="Periviscerokinin"/>
</dbReference>
<dbReference type="Pfam" id="PF08259">
    <property type="entry name" value="Periviscerokin"/>
    <property type="match status" value="1"/>
</dbReference>
<proteinExistence type="evidence at protein level"/>
<name>PVK1_MASDA</name>
<evidence type="ECO:0000255" key="1"/>
<evidence type="ECO:0000269" key="2">
    <source>
    </source>
</evidence>
<evidence type="ECO:0000303" key="3">
    <source>
    </source>
</evidence>
<evidence type="ECO:0000305" key="4"/>
<feature type="peptide" id="PRO_0000378752" description="Periviscerokinin-1" evidence="2">
    <location>
        <begin position="1"/>
        <end position="11"/>
    </location>
</feature>
<feature type="modified residue" description="Valine amide" evidence="2">
    <location>
        <position position="11"/>
    </location>
</feature>
<keyword id="KW-0027">Amidation</keyword>
<keyword id="KW-0903">Direct protein sequencing</keyword>
<keyword id="KW-0527">Neuropeptide</keyword>
<keyword id="KW-0964">Secreted</keyword>
<protein>
    <recommendedName>
        <fullName evidence="3">Periviscerokinin-1</fullName>
        <shortName evidence="3">MasDa-PVK-1</shortName>
    </recommendedName>
</protein>